<name>GATC_GEOKA</name>
<proteinExistence type="inferred from homology"/>
<reference key="1">
    <citation type="journal article" date="2004" name="Nucleic Acids Res.">
        <title>Thermoadaptation trait revealed by the genome sequence of thermophilic Geobacillus kaustophilus.</title>
        <authorList>
            <person name="Takami H."/>
            <person name="Takaki Y."/>
            <person name="Chee G.-J."/>
            <person name="Nishi S."/>
            <person name="Shimamura S."/>
            <person name="Suzuki H."/>
            <person name="Matsui S."/>
            <person name="Uchiyama I."/>
        </authorList>
    </citation>
    <scope>NUCLEOTIDE SEQUENCE [LARGE SCALE GENOMIC DNA]</scope>
    <source>
        <strain>HTA426</strain>
    </source>
</reference>
<dbReference type="EC" id="6.3.5.-" evidence="1"/>
<dbReference type="EMBL" id="BA000043">
    <property type="protein sequence ID" value="BAD74566.1"/>
    <property type="molecule type" value="Genomic_DNA"/>
</dbReference>
<dbReference type="RefSeq" id="WP_011229790.1">
    <property type="nucleotide sequence ID" value="NC_006510.1"/>
</dbReference>
<dbReference type="SMR" id="Q5L3B4"/>
<dbReference type="STRING" id="235909.GK0281"/>
<dbReference type="GeneID" id="32062282"/>
<dbReference type="KEGG" id="gka:GK0281"/>
<dbReference type="eggNOG" id="COG0721">
    <property type="taxonomic scope" value="Bacteria"/>
</dbReference>
<dbReference type="HOGENOM" id="CLU_105899_1_2_9"/>
<dbReference type="Proteomes" id="UP000001172">
    <property type="component" value="Chromosome"/>
</dbReference>
<dbReference type="GO" id="GO:0050566">
    <property type="term" value="F:asparaginyl-tRNA synthase (glutamine-hydrolyzing) activity"/>
    <property type="evidence" value="ECO:0007669"/>
    <property type="project" value="RHEA"/>
</dbReference>
<dbReference type="GO" id="GO:0005524">
    <property type="term" value="F:ATP binding"/>
    <property type="evidence" value="ECO:0007669"/>
    <property type="project" value="UniProtKB-KW"/>
</dbReference>
<dbReference type="GO" id="GO:0050567">
    <property type="term" value="F:glutaminyl-tRNA synthase (glutamine-hydrolyzing) activity"/>
    <property type="evidence" value="ECO:0007669"/>
    <property type="project" value="UniProtKB-UniRule"/>
</dbReference>
<dbReference type="GO" id="GO:0070681">
    <property type="term" value="P:glutaminyl-tRNAGln biosynthesis via transamidation"/>
    <property type="evidence" value="ECO:0007669"/>
    <property type="project" value="TreeGrafter"/>
</dbReference>
<dbReference type="GO" id="GO:0006450">
    <property type="term" value="P:regulation of translational fidelity"/>
    <property type="evidence" value="ECO:0007669"/>
    <property type="project" value="InterPro"/>
</dbReference>
<dbReference type="GO" id="GO:0006412">
    <property type="term" value="P:translation"/>
    <property type="evidence" value="ECO:0007669"/>
    <property type="project" value="UniProtKB-UniRule"/>
</dbReference>
<dbReference type="Gene3D" id="1.10.20.60">
    <property type="entry name" value="Glu-tRNAGln amidotransferase C subunit, N-terminal domain"/>
    <property type="match status" value="1"/>
</dbReference>
<dbReference type="HAMAP" id="MF_00122">
    <property type="entry name" value="GatC"/>
    <property type="match status" value="1"/>
</dbReference>
<dbReference type="InterPro" id="IPR036113">
    <property type="entry name" value="Asp/Glu-ADT_sf_sub_c"/>
</dbReference>
<dbReference type="InterPro" id="IPR003837">
    <property type="entry name" value="GatC"/>
</dbReference>
<dbReference type="NCBIfam" id="TIGR00135">
    <property type="entry name" value="gatC"/>
    <property type="match status" value="1"/>
</dbReference>
<dbReference type="PANTHER" id="PTHR15004">
    <property type="entry name" value="GLUTAMYL-TRNA(GLN) AMIDOTRANSFERASE SUBUNIT C, MITOCHONDRIAL"/>
    <property type="match status" value="1"/>
</dbReference>
<dbReference type="PANTHER" id="PTHR15004:SF0">
    <property type="entry name" value="GLUTAMYL-TRNA(GLN) AMIDOTRANSFERASE SUBUNIT C, MITOCHONDRIAL"/>
    <property type="match status" value="1"/>
</dbReference>
<dbReference type="Pfam" id="PF02686">
    <property type="entry name" value="GatC"/>
    <property type="match status" value="1"/>
</dbReference>
<dbReference type="SUPFAM" id="SSF141000">
    <property type="entry name" value="Glu-tRNAGln amidotransferase C subunit"/>
    <property type="match status" value="1"/>
</dbReference>
<protein>
    <recommendedName>
        <fullName evidence="1">Aspartyl/glutamyl-tRNA(Asn/Gln) amidotransferase subunit C</fullName>
        <shortName evidence="1">Asp/Glu-ADT subunit C</shortName>
        <ecNumber evidence="1">6.3.5.-</ecNumber>
    </recommendedName>
</protein>
<gene>
    <name evidence="1" type="primary">gatC</name>
    <name type="ordered locus">GK0281</name>
</gene>
<evidence type="ECO:0000255" key="1">
    <source>
        <dbReference type="HAMAP-Rule" id="MF_00122"/>
    </source>
</evidence>
<comment type="function">
    <text evidence="1">Allows the formation of correctly charged Asn-tRNA(Asn) or Gln-tRNA(Gln) through the transamidation of misacylated Asp-tRNA(Asn) or Glu-tRNA(Gln) in organisms which lack either or both of asparaginyl-tRNA or glutaminyl-tRNA synthetases. The reaction takes place in the presence of glutamine and ATP through an activated phospho-Asp-tRNA(Asn) or phospho-Glu-tRNA(Gln).</text>
</comment>
<comment type="catalytic activity">
    <reaction evidence="1">
        <text>L-glutamyl-tRNA(Gln) + L-glutamine + ATP + H2O = L-glutaminyl-tRNA(Gln) + L-glutamate + ADP + phosphate + H(+)</text>
        <dbReference type="Rhea" id="RHEA:17521"/>
        <dbReference type="Rhea" id="RHEA-COMP:9681"/>
        <dbReference type="Rhea" id="RHEA-COMP:9684"/>
        <dbReference type="ChEBI" id="CHEBI:15377"/>
        <dbReference type="ChEBI" id="CHEBI:15378"/>
        <dbReference type="ChEBI" id="CHEBI:29985"/>
        <dbReference type="ChEBI" id="CHEBI:30616"/>
        <dbReference type="ChEBI" id="CHEBI:43474"/>
        <dbReference type="ChEBI" id="CHEBI:58359"/>
        <dbReference type="ChEBI" id="CHEBI:78520"/>
        <dbReference type="ChEBI" id="CHEBI:78521"/>
        <dbReference type="ChEBI" id="CHEBI:456216"/>
    </reaction>
</comment>
<comment type="catalytic activity">
    <reaction evidence="1">
        <text>L-aspartyl-tRNA(Asn) + L-glutamine + ATP + H2O = L-asparaginyl-tRNA(Asn) + L-glutamate + ADP + phosphate + 2 H(+)</text>
        <dbReference type="Rhea" id="RHEA:14513"/>
        <dbReference type="Rhea" id="RHEA-COMP:9674"/>
        <dbReference type="Rhea" id="RHEA-COMP:9677"/>
        <dbReference type="ChEBI" id="CHEBI:15377"/>
        <dbReference type="ChEBI" id="CHEBI:15378"/>
        <dbReference type="ChEBI" id="CHEBI:29985"/>
        <dbReference type="ChEBI" id="CHEBI:30616"/>
        <dbReference type="ChEBI" id="CHEBI:43474"/>
        <dbReference type="ChEBI" id="CHEBI:58359"/>
        <dbReference type="ChEBI" id="CHEBI:78515"/>
        <dbReference type="ChEBI" id="CHEBI:78516"/>
        <dbReference type="ChEBI" id="CHEBI:456216"/>
    </reaction>
</comment>
<comment type="subunit">
    <text evidence="1">Heterotrimer of A, B and C subunits.</text>
</comment>
<comment type="similarity">
    <text evidence="1">Belongs to the GatC family.</text>
</comment>
<feature type="chain" id="PRO_1000016122" description="Aspartyl/glutamyl-tRNA(Asn/Gln) amidotransferase subunit C">
    <location>
        <begin position="1"/>
        <end position="96"/>
    </location>
</feature>
<sequence length="96" mass="10909">MSRISIEQVKHVADLARLAITDEEAEMFTKQLDAIITFAEQLNELDTENVPPTSHVLDMRNVMREDIPEPGLPREEVLKNAPDQQDGQFRVPAILE</sequence>
<keyword id="KW-0067">ATP-binding</keyword>
<keyword id="KW-0436">Ligase</keyword>
<keyword id="KW-0547">Nucleotide-binding</keyword>
<keyword id="KW-0648">Protein biosynthesis</keyword>
<keyword id="KW-1185">Reference proteome</keyword>
<accession>Q5L3B4</accession>
<organism>
    <name type="scientific">Geobacillus kaustophilus (strain HTA426)</name>
    <dbReference type="NCBI Taxonomy" id="235909"/>
    <lineage>
        <taxon>Bacteria</taxon>
        <taxon>Bacillati</taxon>
        <taxon>Bacillota</taxon>
        <taxon>Bacilli</taxon>
        <taxon>Bacillales</taxon>
        <taxon>Anoxybacillaceae</taxon>
        <taxon>Geobacillus</taxon>
        <taxon>Geobacillus thermoleovorans group</taxon>
    </lineage>
</organism>